<organism>
    <name type="scientific">Escherichia coli (strain K12)</name>
    <dbReference type="NCBI Taxonomy" id="83333"/>
    <lineage>
        <taxon>Bacteria</taxon>
        <taxon>Pseudomonadati</taxon>
        <taxon>Pseudomonadota</taxon>
        <taxon>Gammaproteobacteria</taxon>
        <taxon>Enterobacterales</taxon>
        <taxon>Enterobacteriaceae</taxon>
        <taxon>Escherichia</taxon>
    </lineage>
</organism>
<reference key="1">
    <citation type="journal article" date="1999" name="J. Bacteriol.">
        <title>Genetic analysis of a chromosomal region containing genes required for assimilation of allantoin nitrogen and linked glyoxylate metabolism in Escherichia coli.</title>
        <authorList>
            <person name="Cusa E."/>
            <person name="Obradors N."/>
            <person name="Baldoma L."/>
            <person name="Badia J."/>
            <person name="Aguilar J."/>
        </authorList>
    </citation>
    <scope>NUCLEOTIDE SEQUENCE [GENOMIC DNA]</scope>
    <scope>FUNCTION</scope>
    <scope>PATHWAY</scope>
    <scope>INDUCTION</scope>
    <source>
        <strain>K12 / ECL1</strain>
    </source>
</reference>
<reference key="2">
    <citation type="submission" date="1997-01" db="EMBL/GenBank/DDBJ databases">
        <title>Sequence of minutes 4-25 of Escherichia coli.</title>
        <authorList>
            <person name="Chung E."/>
            <person name="Allen E."/>
            <person name="Araujo R."/>
            <person name="Aparicio A.M."/>
            <person name="Davis K."/>
            <person name="Duncan M."/>
            <person name="Federspiel N."/>
            <person name="Hyman R."/>
            <person name="Kalman S."/>
            <person name="Komp C."/>
            <person name="Kurdi O."/>
            <person name="Lew H."/>
            <person name="Lin D."/>
            <person name="Namath A."/>
            <person name="Oefner P."/>
            <person name="Roberts D."/>
            <person name="Schramm S."/>
            <person name="Davis R.W."/>
        </authorList>
    </citation>
    <scope>NUCLEOTIDE SEQUENCE [LARGE SCALE GENOMIC DNA]</scope>
    <source>
        <strain>K12 / MG1655 / ATCC 47076</strain>
    </source>
</reference>
<reference key="3">
    <citation type="journal article" date="1997" name="Science">
        <title>The complete genome sequence of Escherichia coli K-12.</title>
        <authorList>
            <person name="Blattner F.R."/>
            <person name="Plunkett G. III"/>
            <person name="Bloch C.A."/>
            <person name="Perna N.T."/>
            <person name="Burland V."/>
            <person name="Riley M."/>
            <person name="Collado-Vides J."/>
            <person name="Glasner J.D."/>
            <person name="Rode C.K."/>
            <person name="Mayhew G.F."/>
            <person name="Gregor J."/>
            <person name="Davis N.W."/>
            <person name="Kirkpatrick H.A."/>
            <person name="Goeden M.A."/>
            <person name="Rose D.J."/>
            <person name="Mau B."/>
            <person name="Shao Y."/>
        </authorList>
    </citation>
    <scope>NUCLEOTIDE SEQUENCE [LARGE SCALE GENOMIC DNA]</scope>
    <source>
        <strain>K12 / MG1655 / ATCC 47076</strain>
    </source>
</reference>
<reference key="4">
    <citation type="journal article" date="2006" name="Mol. Syst. Biol.">
        <title>Highly accurate genome sequences of Escherichia coli K-12 strains MG1655 and W3110.</title>
        <authorList>
            <person name="Hayashi K."/>
            <person name="Morooka N."/>
            <person name="Yamamoto Y."/>
            <person name="Fujita K."/>
            <person name="Isono K."/>
            <person name="Choi S."/>
            <person name="Ohtsubo E."/>
            <person name="Baba T."/>
            <person name="Wanner B.L."/>
            <person name="Mori H."/>
            <person name="Horiuchi T."/>
        </authorList>
    </citation>
    <scope>NUCLEOTIDE SEQUENCE [LARGE SCALE GENOMIC DNA]</scope>
    <source>
        <strain>K12 / W3110 / ATCC 27325 / DSM 5911</strain>
    </source>
</reference>
<reference key="5">
    <citation type="submission" date="2004-10" db="PDB data bank">
        <title>Crystal structure of ureidoglycolate dehydrogenase from Escherichia coli.</title>
        <authorList>
            <person name="Rajashankar K.R."/>
            <person name="Kniewel R."/>
            <person name="Lima C.D."/>
        </authorList>
    </citation>
    <scope>X-RAY CRYSTALLOGRAPHY (2.25 ANGSTROMS) OF 2-349</scope>
    <scope>SUBUNIT</scope>
</reference>
<reference key="6">
    <citation type="journal article" date="2012" name="PLoS ONE">
        <title>Structural and functional insights into (S)-ureidoglycolate dehydrogenase, a metabolic branch point enzyme in nitrogen utilization.</title>
        <authorList>
            <person name="Kim M.I."/>
            <person name="Shin I."/>
            <person name="Cho S."/>
            <person name="Lee J."/>
            <person name="Rhee S."/>
        </authorList>
    </citation>
    <scope>X-RAY CRYSTALLOGRAPHY (1.64 ANGSTROMS) OF 1-337 IN COMPLEX WITH NAD</scope>
    <scope>FUNCTION</scope>
    <scope>CATALYTIC ACTIVITY</scope>
    <scope>MUTAGENESIS OF SER-43; HIS-44; ARG-48; TYR-52; HIS-116; SER-140; ASP-141; MET-251 AND ARG-259</scope>
    <scope>SUBUNIT</scope>
    <scope>ACTIVE SITE</scope>
    <scope>REACTION MECHANISM</scope>
</reference>
<feature type="chain" id="PRO_0000083822" description="Ureidoglycolate dehydrogenase (NAD(+))">
    <location>
        <begin position="1"/>
        <end position="349"/>
    </location>
</feature>
<feature type="active site" description="Proton acceptor" evidence="7">
    <location>
        <position position="116"/>
    </location>
</feature>
<feature type="binding site" evidence="7 9">
    <location>
        <position position="140"/>
    </location>
    <ligand>
        <name>NAD(+)</name>
        <dbReference type="ChEBI" id="CHEBI:57540"/>
    </ligand>
</feature>
<feature type="binding site" evidence="7 9">
    <location>
        <begin position="174"/>
        <end position="176"/>
    </location>
    <ligand>
        <name>NAD(+)</name>
        <dbReference type="ChEBI" id="CHEBI:57540"/>
    </ligand>
</feature>
<feature type="binding site" evidence="7 9">
    <location>
        <position position="224"/>
    </location>
    <ligand>
        <name>NAD(+)</name>
        <dbReference type="ChEBI" id="CHEBI:57540"/>
    </ligand>
</feature>
<feature type="binding site" evidence="7 9">
    <location>
        <begin position="306"/>
        <end position="308"/>
    </location>
    <ligand>
        <name>NAD(+)</name>
        <dbReference type="ChEBI" id="CHEBI:57540"/>
    </ligand>
</feature>
<feature type="site" description="Plays a crucial role in stabilizing the binding of (S)-ureidoglycolate" evidence="7">
    <location>
        <position position="48"/>
    </location>
</feature>
<feature type="mutagenesis site" description="4- and 10-fold decrease of the affinity for NAD and (S)-ureidoglycolate, respectively. Strong decrease of the catalytic efficiency." evidence="2">
    <original>S</original>
    <variation>A</variation>
    <location>
        <position position="43"/>
    </location>
</feature>
<feature type="mutagenesis site" description="16-fold decrease of the affinity for (S)-ureidoglycolate, but same affinity for NAD compared to the wild-type. Strong decrease of the catalytic efficiency." evidence="2">
    <original>H</original>
    <variation>A</variation>
    <location>
        <position position="44"/>
    </location>
</feature>
<feature type="mutagenesis site" description="Loss of dehydrogenase activity." evidence="2">
    <original>R</original>
    <variation>A</variation>
    <location>
        <position position="48"/>
    </location>
</feature>
<feature type="mutagenesis site" description="2- and 16-fold decrease of the affinity for NAD and (S)-ureidoglycolate, respectively. Strong decrease of the catalytic efficiency." evidence="2">
    <original>Y</original>
    <variation>F</variation>
    <location>
        <position position="52"/>
    </location>
</feature>
<feature type="mutagenesis site" description="Loss of dehydrogenase activity." evidence="2">
    <original>H</original>
    <variation>A</variation>
    <location>
        <position position="116"/>
    </location>
</feature>
<feature type="mutagenesis site" description="2- and 12-fold decrease of the affinity for NAD and (S)-ureidoglycolate, respectively. Strong decrease of the catalytic efficiency." evidence="2">
    <original>S</original>
    <variation>A</variation>
    <location>
        <position position="140"/>
    </location>
</feature>
<feature type="mutagenesis site" description="5-fold decrease of the affinity for (S)-ureidoglycolate, but same affinity for NAD compared to the wild-type. Strong decrease of the catalytic efficiency." evidence="2">
    <original>D</original>
    <variation>A</variation>
    <location>
        <position position="141"/>
    </location>
</feature>
<feature type="mutagenesis site" description="14-fold decrease of the affinity for (S)-ureidoglycolate, but same affinity for NAD compared to the wild-type. Strong decrease of the catalytic efficiency." evidence="2">
    <original>D</original>
    <variation>E</variation>
    <location>
        <position position="141"/>
    </location>
</feature>
<feature type="mutagenesis site" description="6-fold decrease of the affinity for (S)-ureidoglycolate, but same affinity for NAD compared to the wild-type. Strong decrease of the catalytic efficiency." evidence="2">
    <original>D</original>
    <variation>N</variation>
    <location>
        <position position="141"/>
    </location>
</feature>
<feature type="mutagenesis site" description="2- and 13-fold decrease of the affinity for NAD and (S)-ureidoglycolate, respectively. Slight decrease of the catalytic efficiency." evidence="2">
    <original>M</original>
    <variation>A</variation>
    <location>
        <position position="251"/>
    </location>
</feature>
<feature type="mutagenesis site" description="2- and 12-fold decrease of the affinity for NAD and (S)-ureidoglycolate, respectively. Slight decrease of the catalytic efficiency." evidence="2">
    <original>R</original>
    <variation>A</variation>
    <location>
        <position position="259"/>
    </location>
</feature>
<feature type="helix" evidence="11">
    <location>
        <begin position="5"/>
        <end position="19"/>
    </location>
</feature>
<feature type="helix" evidence="11">
    <location>
        <begin position="23"/>
        <end position="39"/>
    </location>
</feature>
<feature type="helix" evidence="11">
    <location>
        <begin position="42"/>
        <end position="44"/>
    </location>
</feature>
<feature type="helix" evidence="11">
    <location>
        <begin position="46"/>
        <end position="48"/>
    </location>
</feature>
<feature type="helix" evidence="11">
    <location>
        <begin position="49"/>
        <end position="57"/>
    </location>
</feature>
<feature type="strand" evidence="11">
    <location>
        <begin position="68"/>
        <end position="73"/>
    </location>
</feature>
<feature type="strand" evidence="11">
    <location>
        <begin position="76"/>
        <end position="80"/>
    </location>
</feature>
<feature type="helix" evidence="11">
    <location>
        <begin position="86"/>
        <end position="104"/>
    </location>
</feature>
<feature type="strand" evidence="11">
    <location>
        <begin position="105"/>
        <end position="114"/>
    </location>
</feature>
<feature type="helix" evidence="11">
    <location>
        <begin position="121"/>
        <end position="129"/>
    </location>
</feature>
<feature type="strand" evidence="11">
    <location>
        <begin position="132"/>
        <end position="138"/>
    </location>
</feature>
<feature type="strand" evidence="11">
    <location>
        <begin position="149"/>
        <end position="151"/>
    </location>
</feature>
<feature type="strand" evidence="11">
    <location>
        <begin position="159"/>
        <end position="164"/>
    </location>
</feature>
<feature type="strand" evidence="11">
    <location>
        <begin position="170"/>
        <end position="175"/>
    </location>
</feature>
<feature type="strand" evidence="11">
    <location>
        <begin position="177"/>
        <end position="180"/>
    </location>
</feature>
<feature type="helix" evidence="11">
    <location>
        <begin position="182"/>
        <end position="191"/>
    </location>
</feature>
<feature type="strand" evidence="11">
    <location>
        <begin position="199"/>
        <end position="201"/>
    </location>
</feature>
<feature type="turn" evidence="10">
    <location>
        <begin position="211"/>
        <end position="213"/>
    </location>
</feature>
<feature type="turn" evidence="11">
    <location>
        <begin position="220"/>
        <end position="222"/>
    </location>
</feature>
<feature type="helix" evidence="11">
    <location>
        <begin position="223"/>
        <end position="236"/>
    </location>
</feature>
<feature type="helix" evidence="11">
    <location>
        <begin position="238"/>
        <end position="240"/>
    </location>
</feature>
<feature type="helix" evidence="11">
    <location>
        <begin position="245"/>
        <end position="247"/>
    </location>
</feature>
<feature type="turn" evidence="10">
    <location>
        <begin position="251"/>
        <end position="253"/>
    </location>
</feature>
<feature type="strand" evidence="11">
    <location>
        <begin position="261"/>
        <end position="268"/>
    </location>
</feature>
<feature type="helix" evidence="11">
    <location>
        <begin position="270"/>
        <end position="272"/>
    </location>
</feature>
<feature type="helix" evidence="11">
    <location>
        <begin position="276"/>
        <end position="291"/>
    </location>
</feature>
<feature type="helix" evidence="11">
    <location>
        <begin position="307"/>
        <end position="319"/>
    </location>
</feature>
<feature type="strand" evidence="10">
    <location>
        <begin position="321"/>
        <end position="323"/>
    </location>
</feature>
<feature type="helix" evidence="11">
    <location>
        <begin position="325"/>
        <end position="331"/>
    </location>
</feature>
<name>ALLD_ECOLI</name>
<protein>
    <recommendedName>
        <fullName evidence="4">Ureidoglycolate dehydrogenase (NAD(+))</fullName>
        <ecNumber evidence="2">1.1.1.350</ecNumber>
    </recommendedName>
</protein>
<evidence type="ECO:0000269" key="1">
    <source>
    </source>
</evidence>
<evidence type="ECO:0000269" key="2">
    <source>
    </source>
</evidence>
<evidence type="ECO:0000303" key="3">
    <source>
    </source>
</evidence>
<evidence type="ECO:0000303" key="4">
    <source>
    </source>
</evidence>
<evidence type="ECO:0000305" key="5"/>
<evidence type="ECO:0000305" key="6">
    <source>
    </source>
</evidence>
<evidence type="ECO:0000305" key="7">
    <source>
    </source>
</evidence>
<evidence type="ECO:0000305" key="8">
    <source ref="5"/>
</evidence>
<evidence type="ECO:0007744" key="9">
    <source>
        <dbReference type="PDB" id="4H8A"/>
    </source>
</evidence>
<evidence type="ECO:0007829" key="10">
    <source>
        <dbReference type="PDB" id="1XRH"/>
    </source>
</evidence>
<evidence type="ECO:0007829" key="11">
    <source>
        <dbReference type="PDB" id="4H8A"/>
    </source>
</evidence>
<keyword id="KW-0002">3D-structure</keyword>
<keyword id="KW-0963">Cytoplasm</keyword>
<keyword id="KW-0520">NAD</keyword>
<keyword id="KW-0560">Oxidoreductase</keyword>
<keyword id="KW-0659">Purine metabolism</keyword>
<keyword id="KW-1185">Reference proteome</keyword>
<sequence>MKISRETLHQLIENKLCQAGLKREHAATVAEVLVYADARGIHSHGAVRVEYYAERISKGGTNREPEFRLEETGPCSAILHADNAAGQVAAKMGMEHAIKTAQQNGVAVVGISRMGHSGAISYFVQQAARAGFIGISMCQSDPMVVPFGGAEIYYGTNPLAFAAPGEGDEILTFDMATTVQAWGKVLDARSRNMSIPDTWAVDKNGVPTTDPFAVHALLPAAGPKGYGLMMMIDVLSGVLLGLPFGRQVSSMYDDLHAGRNLGQLHIVINPNFFSSSELFRQHLSQTMRELNAITPAPGFNQVYYPGQDQDIKQRKAAVEGIEIVDDIYQYLISDALYNTSYETKNPFAQ</sequence>
<accession>P77555</accession>
<accession>Q2MBR1</accession>
<gene>
    <name evidence="3" type="primary">allD</name>
    <name type="synonym">glxB8</name>
    <name type="synonym">ylbC</name>
    <name type="ordered locus">b0517</name>
    <name type="ordered locus">JW0505</name>
</gene>
<dbReference type="EC" id="1.1.1.350" evidence="2"/>
<dbReference type="EMBL" id="U89279">
    <property type="protein sequence ID" value="AAB93858.1"/>
    <property type="molecule type" value="Genomic_DNA"/>
</dbReference>
<dbReference type="EMBL" id="U82664">
    <property type="protein sequence ID" value="AAB40269.1"/>
    <property type="molecule type" value="Genomic_DNA"/>
</dbReference>
<dbReference type="EMBL" id="U00096">
    <property type="protein sequence ID" value="AAC73619.1"/>
    <property type="molecule type" value="Genomic_DNA"/>
</dbReference>
<dbReference type="EMBL" id="AP009048">
    <property type="protein sequence ID" value="BAE76295.1"/>
    <property type="molecule type" value="Genomic_DNA"/>
</dbReference>
<dbReference type="PIR" id="D64783">
    <property type="entry name" value="D64783"/>
</dbReference>
<dbReference type="RefSeq" id="NP_415050.1">
    <property type="nucleotide sequence ID" value="NC_000913.3"/>
</dbReference>
<dbReference type="RefSeq" id="WP_000703900.1">
    <property type="nucleotide sequence ID" value="NZ_SSZK01000024.1"/>
</dbReference>
<dbReference type="PDB" id="1XRH">
    <property type="method" value="X-ray"/>
    <property type="resolution" value="2.25 A"/>
    <property type="chains" value="A/B/C/D/E/F/G/H=2-349"/>
</dbReference>
<dbReference type="PDB" id="4H8A">
    <property type="method" value="X-ray"/>
    <property type="resolution" value="1.64 A"/>
    <property type="chains" value="A/B=1-337"/>
</dbReference>
<dbReference type="PDBsum" id="1XRH"/>
<dbReference type="PDBsum" id="4H8A"/>
<dbReference type="SMR" id="P77555"/>
<dbReference type="BioGRID" id="4261441">
    <property type="interactions" value="98"/>
</dbReference>
<dbReference type="FunCoup" id="P77555">
    <property type="interactions" value="171"/>
</dbReference>
<dbReference type="IntAct" id="P77555">
    <property type="interactions" value="5"/>
</dbReference>
<dbReference type="STRING" id="511145.b0517"/>
<dbReference type="PaxDb" id="511145-b0517"/>
<dbReference type="DNASU" id="948342"/>
<dbReference type="EnsemblBacteria" id="AAC73619">
    <property type="protein sequence ID" value="AAC73619"/>
    <property type="gene ID" value="b0517"/>
</dbReference>
<dbReference type="GeneID" id="948342"/>
<dbReference type="KEGG" id="ecj:JW0505"/>
<dbReference type="KEGG" id="eco:b0517"/>
<dbReference type="KEGG" id="ecoc:C3026_02535"/>
<dbReference type="PATRIC" id="fig|1411691.4.peg.1761"/>
<dbReference type="EchoBASE" id="EB3389"/>
<dbReference type="eggNOG" id="COG2055">
    <property type="taxonomic scope" value="Bacteria"/>
</dbReference>
<dbReference type="HOGENOM" id="CLU_040452_3_1_6"/>
<dbReference type="InParanoid" id="P77555"/>
<dbReference type="OMA" id="TNTEPAM"/>
<dbReference type="OrthoDB" id="9769447at2"/>
<dbReference type="PhylomeDB" id="P77555"/>
<dbReference type="BioCyc" id="EcoCyc:G6286-MONOMER"/>
<dbReference type="BioCyc" id="MetaCyc:G6286-MONOMER"/>
<dbReference type="BRENDA" id="1.1.1.350">
    <property type="organism ID" value="2026"/>
</dbReference>
<dbReference type="UniPathway" id="UPA00395">
    <property type="reaction ID" value="UER00657"/>
</dbReference>
<dbReference type="EvolutionaryTrace" id="P77555"/>
<dbReference type="PRO" id="PR:P77555"/>
<dbReference type="Proteomes" id="UP000000625">
    <property type="component" value="Chromosome"/>
</dbReference>
<dbReference type="GO" id="GO:0005737">
    <property type="term" value="C:cytoplasm"/>
    <property type="evidence" value="ECO:0007669"/>
    <property type="project" value="UniProtKB-SubCell"/>
</dbReference>
<dbReference type="GO" id="GO:0009040">
    <property type="term" value="F:ureidoglycolate dehydrogenase activity"/>
    <property type="evidence" value="ECO:0000314"/>
    <property type="project" value="EcoCyc"/>
</dbReference>
<dbReference type="GO" id="GO:0009442">
    <property type="term" value="P:allantoin assimilation pathway"/>
    <property type="evidence" value="ECO:0000314"/>
    <property type="project" value="EcoCyc"/>
</dbReference>
<dbReference type="GO" id="GO:0006144">
    <property type="term" value="P:purine nucleobase metabolic process"/>
    <property type="evidence" value="ECO:0007669"/>
    <property type="project" value="UniProtKB-KW"/>
</dbReference>
<dbReference type="Gene3D" id="1.10.1530.10">
    <property type="match status" value="1"/>
</dbReference>
<dbReference type="Gene3D" id="3.30.1370.60">
    <property type="entry name" value="Hypothetical oxidoreductase yiak, domain 2"/>
    <property type="match status" value="1"/>
</dbReference>
<dbReference type="InterPro" id="IPR043144">
    <property type="entry name" value="Mal/L-sulf/L-lact_DH-like_ah"/>
</dbReference>
<dbReference type="InterPro" id="IPR043143">
    <property type="entry name" value="Mal/L-sulf/L-lact_DH-like_NADP"/>
</dbReference>
<dbReference type="InterPro" id="IPR036111">
    <property type="entry name" value="Mal/L-sulfo/L-lacto_DH-like_sf"/>
</dbReference>
<dbReference type="InterPro" id="IPR003767">
    <property type="entry name" value="Malate/L-lactate_DH-like"/>
</dbReference>
<dbReference type="InterPro" id="IPR017590">
    <property type="entry name" value="Ureidoglycolate_dehydrogenase"/>
</dbReference>
<dbReference type="NCBIfam" id="TIGR03175">
    <property type="entry name" value="AllD"/>
    <property type="match status" value="1"/>
</dbReference>
<dbReference type="NCBIfam" id="NF011599">
    <property type="entry name" value="PRK15025.1"/>
    <property type="match status" value="1"/>
</dbReference>
<dbReference type="PANTHER" id="PTHR11091:SF0">
    <property type="entry name" value="MALATE DEHYDROGENASE"/>
    <property type="match status" value="1"/>
</dbReference>
<dbReference type="PANTHER" id="PTHR11091">
    <property type="entry name" value="OXIDOREDUCTASE-RELATED"/>
    <property type="match status" value="1"/>
</dbReference>
<dbReference type="Pfam" id="PF02615">
    <property type="entry name" value="Ldh_2"/>
    <property type="match status" value="1"/>
</dbReference>
<dbReference type="SUPFAM" id="SSF89733">
    <property type="entry name" value="L-sulfolactate dehydrogenase-like"/>
    <property type="match status" value="1"/>
</dbReference>
<comment type="function">
    <text evidence="1 2">AllD plays a pivotal role as a metabolic branch-point enzyme in nitrogen utilization via the assimilation of allantoin (PubMed:10601204). It is able to utilize allantoin as a sole source of nitrogen under anaerobic conditions (PubMed:10601204). Catalyzes the oxidation of ureidoglycolate to oxalurate (PubMed:23284870).</text>
</comment>
<comment type="catalytic activity">
    <reaction evidence="2">
        <text>(S)-ureidoglycolate + NAD(+) = N-carbamoyl-2-oxoglycine + NADH + H(+)</text>
        <dbReference type="Rhea" id="RHEA:15329"/>
        <dbReference type="ChEBI" id="CHEBI:15378"/>
        <dbReference type="ChEBI" id="CHEBI:57296"/>
        <dbReference type="ChEBI" id="CHEBI:57540"/>
        <dbReference type="ChEBI" id="CHEBI:57824"/>
        <dbReference type="ChEBI" id="CHEBI:57945"/>
        <dbReference type="EC" id="1.1.1.350"/>
    </reaction>
</comment>
<comment type="biophysicochemical properties">
    <kinetics>
        <KM evidence="2">0.56 mM for NAD</KM>
        <KM evidence="2">1.06 mM for (S)-ureidoglycolate</KM>
        <text evidence="2">kcat is 62.39 sec(-1) for dehydrogenase activity with NAD. kcat is 57.06 sec(-1) for dehydrogenase activity with (S)-ureidoglycolate.</text>
    </kinetics>
</comment>
<comment type="pathway">
    <text evidence="6">Nitrogen metabolism; (S)-allantoin degradation; oxalurate from (S)-ureidoglycolate: step 1/1.</text>
</comment>
<comment type="subunit">
    <text evidence="2 8">Homodimer.</text>
</comment>
<comment type="subcellular location">
    <subcellularLocation>
        <location evidence="5">Cytoplasm</location>
    </subcellularLocation>
</comment>
<comment type="induction">
    <text evidence="1">By glyoxylate and allantoin under anaerobic conditions.</text>
</comment>
<comment type="similarity">
    <text evidence="5">Belongs to the LDH2/MDH2 oxidoreductase family.</text>
</comment>
<proteinExistence type="evidence at protein level"/>